<feature type="chain" id="PRO_0000090148" description="Triosephosphate isomerase, cytosolic">
    <location>
        <begin position="1" status="less than"/>
        <end position="195"/>
    </location>
</feature>
<feature type="active site" description="Electrophile" evidence="1">
    <location>
        <position position="37"/>
    </location>
</feature>
<feature type="active site" description="Proton acceptor" evidence="1">
    <location>
        <position position="107"/>
    </location>
</feature>
<feature type="non-terminal residue">
    <location>
        <position position="1"/>
    </location>
</feature>
<keyword id="KW-0963">Cytoplasm</keyword>
<keyword id="KW-0312">Gluconeogenesis</keyword>
<keyword id="KW-0324">Glycolysis</keyword>
<keyword id="KW-0413">Isomerase</keyword>
<name>TPIS_LACSA</name>
<sequence>IQVAAQNCWVKKGGAFTGEVSAEMLANLGVPWVILGHSERRALLNETNEFVGDKVAYALSQGLKVIACVGETLEQREAGTTMEVVAAQTKAIADKISSWDNVVLAYEPVWAIGTGKVASPAQAQEVHAGLRKWFCDNVSAEVSASTRIIYGGSVSGSNCKELGGQTDVDGFLVGGASLKPEFIDIIKAAEVKKSA</sequence>
<evidence type="ECO:0000255" key="1">
    <source>
        <dbReference type="PROSITE-ProRule" id="PRU10127"/>
    </source>
</evidence>
<evidence type="ECO:0000305" key="2"/>
<proteinExistence type="evidence at transcript level"/>
<comment type="catalytic activity">
    <reaction evidence="1">
        <text>D-glyceraldehyde 3-phosphate = dihydroxyacetone phosphate</text>
        <dbReference type="Rhea" id="RHEA:18585"/>
        <dbReference type="ChEBI" id="CHEBI:57642"/>
        <dbReference type="ChEBI" id="CHEBI:59776"/>
        <dbReference type="EC" id="5.3.1.1"/>
    </reaction>
</comment>
<comment type="pathway">
    <text evidence="1">Carbohydrate biosynthesis; gluconeogenesis.</text>
</comment>
<comment type="pathway">
    <text evidence="1">Carbohydrate degradation; glycolysis; D-glyceraldehyde 3-phosphate from glycerone phosphate: step 1/1.</text>
</comment>
<comment type="subunit">
    <text>Homodimer.</text>
</comment>
<comment type="subcellular location">
    <subcellularLocation>
        <location evidence="2">Cytoplasm</location>
    </subcellularLocation>
</comment>
<comment type="miscellaneous">
    <text>In plants, there are two types of TPIS, cytosolic and plastid.</text>
</comment>
<comment type="similarity">
    <text evidence="1">Belongs to the triosephosphate isomerase family.</text>
</comment>
<accession>P48493</accession>
<protein>
    <recommendedName>
        <fullName>Triosephosphate isomerase, cytosolic</fullName>
        <shortName>TIM</shortName>
        <shortName>Triose-phosphate isomerase</shortName>
        <ecNumber>5.3.1.1</ecNumber>
    </recommendedName>
</protein>
<reference key="1">
    <citation type="journal article" date="1992" name="Genome">
        <title>Recent amplification of triose phosphate isomerase related sequences in lettuce.</title>
        <authorList>
            <person name="Paran I."/>
            <person name="Kesseli R.V."/>
            <person name="Westphal L."/>
            <person name="Michelmore R.W."/>
        </authorList>
    </citation>
    <scope>NUCLEOTIDE SEQUENCE [GENOMIC DNA / MRNA]</scope>
</reference>
<dbReference type="EC" id="5.3.1.1"/>
<dbReference type="EMBL" id="S46215">
    <property type="protein sequence ID" value="AAB23371.1"/>
    <property type="molecule type" value="mRNA"/>
</dbReference>
<dbReference type="EMBL" id="S46210">
    <property type="protein sequence ID" value="AAB23372.1"/>
    <property type="molecule type" value="Genomic_DNA"/>
</dbReference>
<dbReference type="EMBL" id="S46213">
    <property type="protein sequence ID" value="AAB23372.1"/>
    <property type="status" value="JOINED"/>
    <property type="molecule type" value="Genomic_DNA"/>
</dbReference>
<dbReference type="SMR" id="P48493"/>
<dbReference type="UniPathway" id="UPA00109">
    <property type="reaction ID" value="UER00189"/>
</dbReference>
<dbReference type="UniPathway" id="UPA00138"/>
<dbReference type="GO" id="GO:0005737">
    <property type="term" value="C:cytoplasm"/>
    <property type="evidence" value="ECO:0007669"/>
    <property type="project" value="UniProtKB-SubCell"/>
</dbReference>
<dbReference type="GO" id="GO:0004807">
    <property type="term" value="F:triose-phosphate isomerase activity"/>
    <property type="evidence" value="ECO:0007669"/>
    <property type="project" value="UniProtKB-EC"/>
</dbReference>
<dbReference type="GO" id="GO:0006094">
    <property type="term" value="P:gluconeogenesis"/>
    <property type="evidence" value="ECO:0007669"/>
    <property type="project" value="UniProtKB-UniPathway"/>
</dbReference>
<dbReference type="GO" id="GO:0006096">
    <property type="term" value="P:glycolytic process"/>
    <property type="evidence" value="ECO:0007669"/>
    <property type="project" value="UniProtKB-UniPathway"/>
</dbReference>
<dbReference type="CDD" id="cd00311">
    <property type="entry name" value="TIM"/>
    <property type="match status" value="1"/>
</dbReference>
<dbReference type="FunFam" id="3.20.20.70:FF:000016">
    <property type="entry name" value="Triosephosphate isomerase"/>
    <property type="match status" value="1"/>
</dbReference>
<dbReference type="Gene3D" id="3.20.20.70">
    <property type="entry name" value="Aldolase class I"/>
    <property type="match status" value="1"/>
</dbReference>
<dbReference type="InterPro" id="IPR013785">
    <property type="entry name" value="Aldolase_TIM"/>
</dbReference>
<dbReference type="InterPro" id="IPR035990">
    <property type="entry name" value="TIM_sf"/>
</dbReference>
<dbReference type="InterPro" id="IPR000652">
    <property type="entry name" value="Triosephosphate_isomerase"/>
</dbReference>
<dbReference type="InterPro" id="IPR020861">
    <property type="entry name" value="Triosephosphate_isomerase_AS"/>
</dbReference>
<dbReference type="NCBIfam" id="TIGR00419">
    <property type="entry name" value="tim"/>
    <property type="match status" value="1"/>
</dbReference>
<dbReference type="PANTHER" id="PTHR21139">
    <property type="entry name" value="TRIOSEPHOSPHATE ISOMERASE"/>
    <property type="match status" value="1"/>
</dbReference>
<dbReference type="PANTHER" id="PTHR21139:SF34">
    <property type="entry name" value="TRIOSEPHOSPHATE ISOMERASE, CYTOSOLIC"/>
    <property type="match status" value="1"/>
</dbReference>
<dbReference type="Pfam" id="PF00121">
    <property type="entry name" value="TIM"/>
    <property type="match status" value="1"/>
</dbReference>
<dbReference type="SUPFAM" id="SSF51351">
    <property type="entry name" value="Triosephosphate isomerase (TIM)"/>
    <property type="match status" value="1"/>
</dbReference>
<dbReference type="PROSITE" id="PS00171">
    <property type="entry name" value="TIM_1"/>
    <property type="match status" value="1"/>
</dbReference>
<dbReference type="PROSITE" id="PS51440">
    <property type="entry name" value="TIM_2"/>
    <property type="match status" value="1"/>
</dbReference>
<organism>
    <name type="scientific">Lactuca sativa</name>
    <name type="common">Garden lettuce</name>
    <dbReference type="NCBI Taxonomy" id="4236"/>
    <lineage>
        <taxon>Eukaryota</taxon>
        <taxon>Viridiplantae</taxon>
        <taxon>Streptophyta</taxon>
        <taxon>Embryophyta</taxon>
        <taxon>Tracheophyta</taxon>
        <taxon>Spermatophyta</taxon>
        <taxon>Magnoliopsida</taxon>
        <taxon>eudicotyledons</taxon>
        <taxon>Gunneridae</taxon>
        <taxon>Pentapetalae</taxon>
        <taxon>asterids</taxon>
        <taxon>campanulids</taxon>
        <taxon>Asterales</taxon>
        <taxon>Asteraceae</taxon>
        <taxon>Cichorioideae</taxon>
        <taxon>Cichorieae</taxon>
        <taxon>Lactucinae</taxon>
        <taxon>Lactuca</taxon>
    </lineage>
</organism>